<organism>
    <name type="scientific">Polaromonas naphthalenivorans (strain CJ2)</name>
    <dbReference type="NCBI Taxonomy" id="365044"/>
    <lineage>
        <taxon>Bacteria</taxon>
        <taxon>Pseudomonadati</taxon>
        <taxon>Pseudomonadota</taxon>
        <taxon>Betaproteobacteria</taxon>
        <taxon>Burkholderiales</taxon>
        <taxon>Comamonadaceae</taxon>
        <taxon>Polaromonas</taxon>
    </lineage>
</organism>
<name>RL3_POLNA</name>
<keyword id="KW-0488">Methylation</keyword>
<keyword id="KW-1185">Reference proteome</keyword>
<keyword id="KW-0687">Ribonucleoprotein</keyword>
<keyword id="KW-0689">Ribosomal protein</keyword>
<keyword id="KW-0694">RNA-binding</keyword>
<keyword id="KW-0699">rRNA-binding</keyword>
<accession>A1VIQ0</accession>
<evidence type="ECO:0000255" key="1">
    <source>
        <dbReference type="HAMAP-Rule" id="MF_01325"/>
    </source>
</evidence>
<evidence type="ECO:0000256" key="2">
    <source>
        <dbReference type="SAM" id="MobiDB-lite"/>
    </source>
</evidence>
<evidence type="ECO:0000305" key="3"/>
<dbReference type="EMBL" id="CP000529">
    <property type="protein sequence ID" value="ABM35528.1"/>
    <property type="molecule type" value="Genomic_DNA"/>
</dbReference>
<dbReference type="RefSeq" id="WP_011799637.1">
    <property type="nucleotide sequence ID" value="NC_008781.1"/>
</dbReference>
<dbReference type="SMR" id="A1VIQ0"/>
<dbReference type="STRING" id="365044.Pnap_0203"/>
<dbReference type="KEGG" id="pna:Pnap_0203"/>
<dbReference type="eggNOG" id="COG0087">
    <property type="taxonomic scope" value="Bacteria"/>
</dbReference>
<dbReference type="HOGENOM" id="CLU_044142_4_1_4"/>
<dbReference type="OrthoDB" id="9806135at2"/>
<dbReference type="Proteomes" id="UP000000644">
    <property type="component" value="Chromosome"/>
</dbReference>
<dbReference type="GO" id="GO:0022625">
    <property type="term" value="C:cytosolic large ribosomal subunit"/>
    <property type="evidence" value="ECO:0007669"/>
    <property type="project" value="TreeGrafter"/>
</dbReference>
<dbReference type="GO" id="GO:0019843">
    <property type="term" value="F:rRNA binding"/>
    <property type="evidence" value="ECO:0007669"/>
    <property type="project" value="UniProtKB-UniRule"/>
</dbReference>
<dbReference type="GO" id="GO:0003735">
    <property type="term" value="F:structural constituent of ribosome"/>
    <property type="evidence" value="ECO:0007669"/>
    <property type="project" value="InterPro"/>
</dbReference>
<dbReference type="GO" id="GO:0006412">
    <property type="term" value="P:translation"/>
    <property type="evidence" value="ECO:0007669"/>
    <property type="project" value="UniProtKB-UniRule"/>
</dbReference>
<dbReference type="FunFam" id="2.40.30.10:FF:000004">
    <property type="entry name" value="50S ribosomal protein L3"/>
    <property type="match status" value="1"/>
</dbReference>
<dbReference type="FunFam" id="3.30.160.810:FF:000001">
    <property type="entry name" value="50S ribosomal protein L3"/>
    <property type="match status" value="1"/>
</dbReference>
<dbReference type="Gene3D" id="3.30.160.810">
    <property type="match status" value="1"/>
</dbReference>
<dbReference type="Gene3D" id="2.40.30.10">
    <property type="entry name" value="Translation factors"/>
    <property type="match status" value="1"/>
</dbReference>
<dbReference type="HAMAP" id="MF_01325_B">
    <property type="entry name" value="Ribosomal_uL3_B"/>
    <property type="match status" value="1"/>
</dbReference>
<dbReference type="InterPro" id="IPR000597">
    <property type="entry name" value="Ribosomal_uL3"/>
</dbReference>
<dbReference type="InterPro" id="IPR019927">
    <property type="entry name" value="Ribosomal_uL3_bac/org-type"/>
</dbReference>
<dbReference type="InterPro" id="IPR019926">
    <property type="entry name" value="Ribosomal_uL3_CS"/>
</dbReference>
<dbReference type="InterPro" id="IPR009000">
    <property type="entry name" value="Transl_B-barrel_sf"/>
</dbReference>
<dbReference type="NCBIfam" id="TIGR03625">
    <property type="entry name" value="L3_bact"/>
    <property type="match status" value="1"/>
</dbReference>
<dbReference type="PANTHER" id="PTHR11229">
    <property type="entry name" value="50S RIBOSOMAL PROTEIN L3"/>
    <property type="match status" value="1"/>
</dbReference>
<dbReference type="PANTHER" id="PTHR11229:SF16">
    <property type="entry name" value="LARGE RIBOSOMAL SUBUNIT PROTEIN UL3C"/>
    <property type="match status" value="1"/>
</dbReference>
<dbReference type="Pfam" id="PF00297">
    <property type="entry name" value="Ribosomal_L3"/>
    <property type="match status" value="1"/>
</dbReference>
<dbReference type="SUPFAM" id="SSF50447">
    <property type="entry name" value="Translation proteins"/>
    <property type="match status" value="1"/>
</dbReference>
<dbReference type="PROSITE" id="PS00474">
    <property type="entry name" value="RIBOSOMAL_L3"/>
    <property type="match status" value="1"/>
</dbReference>
<comment type="function">
    <text evidence="1">One of the primary rRNA binding proteins, it binds directly near the 3'-end of the 23S rRNA, where it nucleates assembly of the 50S subunit.</text>
</comment>
<comment type="subunit">
    <text evidence="1">Part of the 50S ribosomal subunit. Forms a cluster with proteins L14 and L19.</text>
</comment>
<comment type="PTM">
    <text evidence="1">Methylated by PrmB.</text>
</comment>
<comment type="similarity">
    <text evidence="1">Belongs to the universal ribosomal protein uL3 family.</text>
</comment>
<gene>
    <name evidence="1" type="primary">rplC</name>
    <name type="ordered locus">Pnap_0203</name>
</gene>
<feature type="chain" id="PRO_1000052104" description="Large ribosomal subunit protein uL3">
    <location>
        <begin position="1"/>
        <end position="226"/>
    </location>
</feature>
<feature type="region of interest" description="Disordered" evidence="2">
    <location>
        <begin position="135"/>
        <end position="158"/>
    </location>
</feature>
<feature type="compositionally biased region" description="Polar residues" evidence="2">
    <location>
        <begin position="137"/>
        <end position="150"/>
    </location>
</feature>
<feature type="modified residue" description="N5-methylglutamine" evidence="1">
    <location>
        <position position="158"/>
    </location>
</feature>
<reference key="1">
    <citation type="journal article" date="2009" name="Environ. Microbiol.">
        <title>The genome of Polaromonas naphthalenivorans strain CJ2, isolated from coal tar-contaminated sediment, reveals physiological and metabolic versatility and evolution through extensive horizontal gene transfer.</title>
        <authorList>
            <person name="Yagi J.M."/>
            <person name="Sims D."/>
            <person name="Brettin T."/>
            <person name="Bruce D."/>
            <person name="Madsen E.L."/>
        </authorList>
    </citation>
    <scope>NUCLEOTIDE SEQUENCE [LARGE SCALE GENOMIC DNA]</scope>
    <source>
        <strain>CJ2</strain>
    </source>
</reference>
<protein>
    <recommendedName>
        <fullName evidence="1">Large ribosomal subunit protein uL3</fullName>
    </recommendedName>
    <alternativeName>
        <fullName evidence="3">50S ribosomal protein L3</fullName>
    </alternativeName>
</protein>
<proteinExistence type="inferred from homology"/>
<sequence length="226" mass="23608">MSLSNSLGLLGRKVGMMRLFTDDGDTVPVTVVDVSNNRVTQVKTEANDGYDALQVAFGSRKASRVTKPEAGHLAKAGVEAGEILKEFRVTADVAGKYAAGTVVPAADIFAVGQLVDVQGTSIGKGFAGTIKRHKMSSQRASHGNSRSHNVPGSIGMAQDPGRVFPGKRMTGHLGDVTKTTQNLDIVRIDEARQLLMIRGAVPGSKGGFVTVRAAIKAKPTAAKGAN</sequence>